<organism>
    <name type="scientific">Rattus norvegicus</name>
    <name type="common">Rat</name>
    <dbReference type="NCBI Taxonomy" id="10116"/>
    <lineage>
        <taxon>Eukaryota</taxon>
        <taxon>Metazoa</taxon>
        <taxon>Chordata</taxon>
        <taxon>Craniata</taxon>
        <taxon>Vertebrata</taxon>
        <taxon>Euteleostomi</taxon>
        <taxon>Mammalia</taxon>
        <taxon>Eutheria</taxon>
        <taxon>Euarchontoglires</taxon>
        <taxon>Glires</taxon>
        <taxon>Rodentia</taxon>
        <taxon>Myomorpha</taxon>
        <taxon>Muroidea</taxon>
        <taxon>Muridae</taxon>
        <taxon>Murinae</taxon>
        <taxon>Rattus</taxon>
    </lineage>
</organism>
<proteinExistence type="evidence at protein level"/>
<feature type="chain" id="PRO_0000413636" description="CREB-regulated transcription coactivator 1">
    <location>
        <begin position="1"/>
        <end position="630"/>
    </location>
</feature>
<feature type="region of interest" description="Disordered" evidence="4">
    <location>
        <begin position="142"/>
        <end position="174"/>
    </location>
</feature>
<feature type="region of interest" description="Disordered" evidence="4">
    <location>
        <begin position="187"/>
        <end position="221"/>
    </location>
</feature>
<feature type="region of interest" description="Disordered" evidence="4">
    <location>
        <begin position="256"/>
        <end position="331"/>
    </location>
</feature>
<feature type="region of interest" description="Disordered" evidence="4">
    <location>
        <begin position="356"/>
        <end position="475"/>
    </location>
</feature>
<feature type="short sequence motif" description="Nuclear export signal" evidence="1">
    <location>
        <begin position="242"/>
        <end position="258"/>
    </location>
</feature>
<feature type="compositionally biased region" description="Polar residues" evidence="4">
    <location>
        <begin position="151"/>
        <end position="167"/>
    </location>
</feature>
<feature type="compositionally biased region" description="Basic and acidic residues" evidence="4">
    <location>
        <begin position="194"/>
        <end position="208"/>
    </location>
</feature>
<feature type="compositionally biased region" description="Pro residues" evidence="4">
    <location>
        <begin position="256"/>
        <end position="270"/>
    </location>
</feature>
<feature type="compositionally biased region" description="Polar residues" evidence="4">
    <location>
        <begin position="292"/>
        <end position="301"/>
    </location>
</feature>
<feature type="compositionally biased region" description="Polar residues" evidence="4">
    <location>
        <begin position="310"/>
        <end position="331"/>
    </location>
</feature>
<feature type="compositionally biased region" description="Pro residues" evidence="4">
    <location>
        <begin position="361"/>
        <end position="384"/>
    </location>
</feature>
<feature type="compositionally biased region" description="Low complexity" evidence="4">
    <location>
        <begin position="385"/>
        <end position="394"/>
    </location>
</feature>
<feature type="compositionally biased region" description="Polar residues" evidence="4">
    <location>
        <begin position="414"/>
        <end position="426"/>
    </location>
</feature>
<feature type="compositionally biased region" description="Polar residues" evidence="4">
    <location>
        <begin position="450"/>
        <end position="475"/>
    </location>
</feature>
<feature type="site" description="Required for ubiquitination and degradation" evidence="1">
    <location>
        <position position="571"/>
    </location>
</feature>
<feature type="modified residue" description="Phosphoserine" evidence="2">
    <location>
        <position position="64"/>
    </location>
</feature>
<feature type="modified residue" description="Phosphoserine" evidence="3">
    <location>
        <position position="113"/>
    </location>
</feature>
<feature type="modified residue" description="Phosphothreonine" evidence="2">
    <location>
        <position position="149"/>
    </location>
</feature>
<feature type="modified residue" description="Phosphoserine; by SIK1 and SIK2" evidence="5">
    <location>
        <position position="151"/>
    </location>
</feature>
<feature type="modified residue" description="Phosphothreonine" evidence="3">
    <location>
        <position position="161"/>
    </location>
</feature>
<evidence type="ECO:0000250" key="1"/>
<evidence type="ECO:0000250" key="2">
    <source>
        <dbReference type="UniProtKB" id="Q68ED7"/>
    </source>
</evidence>
<evidence type="ECO:0000250" key="3">
    <source>
        <dbReference type="UniProtKB" id="Q6UUV9"/>
    </source>
</evidence>
<evidence type="ECO:0000256" key="4">
    <source>
        <dbReference type="SAM" id="MobiDB-lite"/>
    </source>
</evidence>
<evidence type="ECO:0000269" key="5">
    <source>
    </source>
</evidence>
<evidence type="ECO:0000305" key="6"/>
<keyword id="KW-0010">Activator</keyword>
<keyword id="KW-0090">Biological rhythms</keyword>
<keyword id="KW-0963">Cytoplasm</keyword>
<keyword id="KW-0539">Nucleus</keyword>
<keyword id="KW-0597">Phosphoprotein</keyword>
<keyword id="KW-1185">Reference proteome</keyword>
<keyword id="KW-0804">Transcription</keyword>
<keyword id="KW-0805">Transcription regulation</keyword>
<protein>
    <recommendedName>
        <fullName>CREB-regulated transcription coactivator 1</fullName>
    </recommendedName>
    <alternativeName>
        <fullName>Mucoepidermoid carcinoma translocated protein 1 homolog</fullName>
    </alternativeName>
    <alternativeName>
        <fullName>Transducer of regulated cAMP response element-binding protein 1</fullName>
        <shortName>TORC-1</shortName>
        <shortName>Transducer of CREB protein 1</shortName>
    </alternativeName>
</protein>
<comment type="function">
    <text evidence="2 3 5">Transcriptional coactivator for CREB1 which activates transcription through both consensus and variant cAMP response element (CRE) sites. Acts as a coactivator, in the SIK/TORC signaling pathway, being active when dephosphorylated and acts independently of CREB1 'Ser-133' phosphorylation. Enhances the interaction of CREB1 with TAF4. Regulates the expression of specific CREB-activated genes such as the steroidogenic gene, StAR. Potent coactivator of PGC1alpha and inducer of mitochondrial biogenesis in muscle cells (By similarity). In the hippocampus, involved in late-phase long-term potentiation (L-LTP) maintenance at the Schaffer collateral-CA1 synapses. May be required for dendritic growth of developing cortical neurons. In concert with SIK1, regulates the light-induced entrainment of the circadian clock. In response to light stimulus, coactivates the CREB-mediated transcription of PER1 which plays an important role in the photic entrainment of the circadian clock (By similarity).</text>
</comment>
<comment type="subunit">
    <text evidence="3">Binds, as a tetramer, through its N-terminal region, with the bZIP domain of CREB1. 'Arg-314' in the bZIP domain of CREB1 is essential for this interaction. Interaction, via its C-terminal, with TAF4, enhances recruitment of TAF4 to CREB1. Interacts with 14-3-3 proteins, including YWHAE/14-3-3 epsilon. Interacts with calmodulin-dependent catalytic subunit PPP3CA/calcineurin A.</text>
</comment>
<comment type="subcellular location">
    <subcellularLocation>
        <location evidence="2">Cytoplasm</location>
    </subcellularLocation>
    <subcellularLocation>
        <location evidence="2">Nucleus</location>
    </subcellularLocation>
    <text evidence="2 3">Cytoplasmic when phosphorylated by SIK or AMPK and when sequestered by 14-3-3 proteins. Translocated to the nucleus on Ser-151 dephosphorylation, instigated by a number of factors including calcium ion and cAMP levels. Light stimulation triggers a nuclear accumulation in the suprachiasmatic nucleus (SCN) of the brain.</text>
</comment>
<comment type="tissue specificity">
    <text evidence="5">Highly expressed in developing cortical neurons, peaking during dendrite development.</text>
</comment>
<comment type="PTM">
    <text evidence="5">Phosphorylation/dephosphorylation states of Ser-151 are required for regulating transduction of CREB activity. TORCs are inactive when phosphorylated, and active when dephosphorylated at this site. This primary site of phosphorylation is mediated by SIKs (SIK1 and SIK2), is regulated by cAMP and calcium levels and is dependent on the phosphorylation of SIKs by LKB1.</text>
</comment>
<comment type="similarity">
    <text evidence="6">Belongs to the TORC family.</text>
</comment>
<sequence length="630" mass="66924">MATSNNPRKFSEKIALHNQKQAEETAAFEEVMKDLSLTRAARLQLQKSQYLQLGPSRGQYYGGSLPNVNQIGSSSMDLSFQTPFQSSGLDTSRTTRHHGLVDRVYRERGRLGSPHRRPLSVDKHGRQADSCPYGTVYLSPPADTSWRRTNSDSALHQSTMTPTQAESFTGGPQDAHQKRVLLLTVPGMEETGSETDKTLSKQSWDSKKAGSRPKSCEVPGINIFPSADQENTAALIPATHNTGGSLPDLSTIHFPSPLPTPLDPEEPPFPALTSSGSTGSLAHLGVGGTGQGMNTPSSSPQRRPAVVSPLSLSTEARRQQAQQVPPTLSPLSPITQAVAMDALSLEQQLPYAFFTQAGSQQPPPQPQPPPPPPPVSQQQPPPPQVSVGLPQGGPLLPSASLTRGPQLPPLAVTVPSTLPQSPTESPGQPPMGIDVTSAPALQYRTGAGSPATQSPTSPVSNQGFSPGSSPQHTSTLGSVFGDAYYEQQMTARQANALSRQLEQFNMMENAISSSSLYNPGSTLNYSQAAMMGLSGSHGGLQDPQQLGYAGHGGIPNIILTVTGESPPSLSKELSSTLAGVSDVSFDSDHQFPLDELKIDPLTLDGLHMLNDPDMVLADPATEDTFRMDRL</sequence>
<accession>Q157S1</accession>
<dbReference type="EMBL" id="DQ538521">
    <property type="protein sequence ID" value="ABG23027.1"/>
    <property type="molecule type" value="mRNA"/>
</dbReference>
<dbReference type="RefSeq" id="NP_001040580.1">
    <property type="nucleotide sequence ID" value="NM_001047115.3"/>
</dbReference>
<dbReference type="SMR" id="Q157S1"/>
<dbReference type="BioGRID" id="599406">
    <property type="interactions" value="1"/>
</dbReference>
<dbReference type="FunCoup" id="Q157S1">
    <property type="interactions" value="1872"/>
</dbReference>
<dbReference type="IntAct" id="Q157S1">
    <property type="interactions" value="1"/>
</dbReference>
<dbReference type="STRING" id="10116.ENSRNOP00000030925"/>
<dbReference type="iPTMnet" id="Q157S1"/>
<dbReference type="PhosphoSitePlus" id="Q157S1"/>
<dbReference type="jPOST" id="Q157S1"/>
<dbReference type="PaxDb" id="10116-ENSRNOP00000030925"/>
<dbReference type="GeneID" id="684527"/>
<dbReference type="KEGG" id="rno:684527"/>
<dbReference type="AGR" id="RGD:1589158"/>
<dbReference type="CTD" id="23373"/>
<dbReference type="RGD" id="1589158">
    <property type="gene designation" value="Crtc1"/>
</dbReference>
<dbReference type="VEuPathDB" id="HostDB:ENSRNOG00000022421"/>
<dbReference type="eggNOG" id="ENOG502QU41">
    <property type="taxonomic scope" value="Eukaryota"/>
</dbReference>
<dbReference type="HOGENOM" id="CLU_019357_2_0_1"/>
<dbReference type="InParanoid" id="Q157S1"/>
<dbReference type="OrthoDB" id="66114at9989"/>
<dbReference type="PhylomeDB" id="Q157S1"/>
<dbReference type="PRO" id="PR:Q157S1"/>
<dbReference type="Proteomes" id="UP000002494">
    <property type="component" value="Chromosome 16"/>
</dbReference>
<dbReference type="Bgee" id="ENSRNOG00000022421">
    <property type="expression patterns" value="Expressed in frontal cortex and 18 other cell types or tissues"/>
</dbReference>
<dbReference type="GO" id="GO:0005737">
    <property type="term" value="C:cytoplasm"/>
    <property type="evidence" value="ECO:0000250"/>
    <property type="project" value="UniProtKB"/>
</dbReference>
<dbReference type="GO" id="GO:0030425">
    <property type="term" value="C:dendrite"/>
    <property type="evidence" value="ECO:0000314"/>
    <property type="project" value="RGD"/>
</dbReference>
<dbReference type="GO" id="GO:0098978">
    <property type="term" value="C:glutamatergic synapse"/>
    <property type="evidence" value="ECO:0000314"/>
    <property type="project" value="SynGO"/>
</dbReference>
<dbReference type="GO" id="GO:0043025">
    <property type="term" value="C:neuronal cell body"/>
    <property type="evidence" value="ECO:0000314"/>
    <property type="project" value="RGD"/>
</dbReference>
<dbReference type="GO" id="GO:0005634">
    <property type="term" value="C:nucleus"/>
    <property type="evidence" value="ECO:0000250"/>
    <property type="project" value="UniProtKB"/>
</dbReference>
<dbReference type="GO" id="GO:0014069">
    <property type="term" value="C:postsynaptic density"/>
    <property type="evidence" value="ECO:0000314"/>
    <property type="project" value="SynGO"/>
</dbReference>
<dbReference type="GO" id="GO:0008140">
    <property type="term" value="F:cAMP response element binding protein binding"/>
    <property type="evidence" value="ECO:0000266"/>
    <property type="project" value="RGD"/>
</dbReference>
<dbReference type="GO" id="GO:0003713">
    <property type="term" value="F:transcription coactivator activity"/>
    <property type="evidence" value="ECO:0000318"/>
    <property type="project" value="GO_Central"/>
</dbReference>
<dbReference type="GO" id="GO:0071320">
    <property type="term" value="P:cellular response to cAMP"/>
    <property type="evidence" value="ECO:0000318"/>
    <property type="project" value="GO_Central"/>
</dbReference>
<dbReference type="GO" id="GO:0097009">
    <property type="term" value="P:energy homeostasis"/>
    <property type="evidence" value="ECO:0000266"/>
    <property type="project" value="RGD"/>
</dbReference>
<dbReference type="GO" id="GO:0043153">
    <property type="term" value="P:entrainment of circadian clock by photoperiod"/>
    <property type="evidence" value="ECO:0000250"/>
    <property type="project" value="UniProtKB"/>
</dbReference>
<dbReference type="GO" id="GO:0007613">
    <property type="term" value="P:memory"/>
    <property type="evidence" value="ECO:0000266"/>
    <property type="project" value="RGD"/>
</dbReference>
<dbReference type="GO" id="GO:1902631">
    <property type="term" value="P:negative regulation of membrane hyperpolarization"/>
    <property type="evidence" value="ECO:0000266"/>
    <property type="project" value="RGD"/>
</dbReference>
<dbReference type="GO" id="GO:0032793">
    <property type="term" value="P:positive regulation of CREB transcription factor activity"/>
    <property type="evidence" value="ECO:0000250"/>
    <property type="project" value="UniProtKB"/>
</dbReference>
<dbReference type="GO" id="GO:1900006">
    <property type="term" value="P:positive regulation of dendrite development"/>
    <property type="evidence" value="ECO:0000315"/>
    <property type="project" value="RGD"/>
</dbReference>
<dbReference type="GO" id="GO:1900273">
    <property type="term" value="P:positive regulation of long-term synaptic potentiation"/>
    <property type="evidence" value="ECO:0000315"/>
    <property type="project" value="RGD"/>
</dbReference>
<dbReference type="GO" id="GO:0045944">
    <property type="term" value="P:positive regulation of transcription by RNA polymerase II"/>
    <property type="evidence" value="ECO:0000266"/>
    <property type="project" value="RGD"/>
</dbReference>
<dbReference type="GO" id="GO:0099527">
    <property type="term" value="P:postsynapse to nucleus signaling pathway"/>
    <property type="evidence" value="ECO:0000314"/>
    <property type="project" value="SynGO"/>
</dbReference>
<dbReference type="GO" id="GO:0051289">
    <property type="term" value="P:protein homotetramerization"/>
    <property type="evidence" value="ECO:0007669"/>
    <property type="project" value="InterPro"/>
</dbReference>
<dbReference type="GO" id="GO:0048511">
    <property type="term" value="P:rhythmic process"/>
    <property type="evidence" value="ECO:0007669"/>
    <property type="project" value="UniProtKB-KW"/>
</dbReference>
<dbReference type="InterPro" id="IPR024786">
    <property type="entry name" value="TORC"/>
</dbReference>
<dbReference type="InterPro" id="IPR024785">
    <property type="entry name" value="TORC_C"/>
</dbReference>
<dbReference type="InterPro" id="IPR024784">
    <property type="entry name" value="TORC_M"/>
</dbReference>
<dbReference type="InterPro" id="IPR024783">
    <property type="entry name" value="TORC_N"/>
</dbReference>
<dbReference type="PANTHER" id="PTHR13589">
    <property type="entry name" value="CREB-REGULATED TRANSCRIPTION COACTIVATOR"/>
    <property type="match status" value="1"/>
</dbReference>
<dbReference type="PANTHER" id="PTHR13589:SF14">
    <property type="entry name" value="CREB-REGULATED TRANSCRIPTION COACTIVATOR 1"/>
    <property type="match status" value="1"/>
</dbReference>
<dbReference type="Pfam" id="PF12886">
    <property type="entry name" value="TORC_C"/>
    <property type="match status" value="1"/>
</dbReference>
<dbReference type="Pfam" id="PF12885">
    <property type="entry name" value="TORC_M"/>
    <property type="match status" value="1"/>
</dbReference>
<dbReference type="Pfam" id="PF12884">
    <property type="entry name" value="TORC_N"/>
    <property type="match status" value="1"/>
</dbReference>
<name>CRTC1_RAT</name>
<reference key="1">
    <citation type="submission" date="2006-05" db="EMBL/GenBank/DDBJ databases">
        <title>TORC1 in the central nervous system.</title>
        <authorList>
            <person name="Hao W."/>
            <person name="Hong S."/>
            <person name="Zhiqi X."/>
        </authorList>
    </citation>
    <scope>NUCLEOTIDE SEQUENCE [MRNA]</scope>
    <source>
        <strain>Sprague-Dawley</strain>
    </source>
</reference>
<reference key="2">
    <citation type="journal article" date="2009" name="J. Neurosci.">
        <title>TORC1 regulates activity-dependent CREB-target gene transcription and dendritic growth of developing cortical neurons.</title>
        <authorList>
            <person name="Li S."/>
            <person name="Zhang C."/>
            <person name="Takemori H."/>
            <person name="Zhou Y."/>
            <person name="Xiong Z.Q."/>
        </authorList>
    </citation>
    <scope>FUNCTION</scope>
    <scope>TISSUE SPECIFICITY</scope>
    <scope>PHOSPHORYLATION AT SER-151</scope>
</reference>
<gene>
    <name type="primary">Crtc1</name>
    <name type="synonym">Mect1</name>
    <name type="synonym">Torc1</name>
</gene>